<feature type="chain" id="PRO_1000204547" description="Large ribosomal subunit protein bL36">
    <location>
        <begin position="1"/>
        <end position="37"/>
    </location>
</feature>
<reference key="1">
    <citation type="journal article" date="2009" name="Genome Res.">
        <title>Whole genome sequence of Desulfovibrio magneticus strain RS-1 revealed common gene clusters in magnetotactic bacteria.</title>
        <authorList>
            <person name="Nakazawa H."/>
            <person name="Arakaki A."/>
            <person name="Narita-Yamada S."/>
            <person name="Yashiro I."/>
            <person name="Jinno K."/>
            <person name="Aoki N."/>
            <person name="Tsuruyama A."/>
            <person name="Okamura Y."/>
            <person name="Tanikawa S."/>
            <person name="Fujita N."/>
            <person name="Takeyama H."/>
            <person name="Matsunaga T."/>
        </authorList>
    </citation>
    <scope>NUCLEOTIDE SEQUENCE [LARGE SCALE GENOMIC DNA]</scope>
    <source>
        <strain>ATCC 700980 / DSM 13731 / RS-1</strain>
    </source>
</reference>
<sequence>MKVRPSVKKLCPKCKIIRRHGVVRVICDNPRHKQRQG</sequence>
<comment type="similarity">
    <text evidence="1">Belongs to the bacterial ribosomal protein bL36 family.</text>
</comment>
<keyword id="KW-0687">Ribonucleoprotein</keyword>
<keyword id="KW-0689">Ribosomal protein</keyword>
<accession>C4XLZ5</accession>
<name>RL36_SOLM1</name>
<protein>
    <recommendedName>
        <fullName evidence="1">Large ribosomal subunit protein bL36</fullName>
    </recommendedName>
    <alternativeName>
        <fullName evidence="2">50S ribosomal protein L36</fullName>
    </alternativeName>
</protein>
<dbReference type="EMBL" id="AP010904">
    <property type="protein sequence ID" value="BAH74733.1"/>
    <property type="molecule type" value="Genomic_DNA"/>
</dbReference>
<dbReference type="RefSeq" id="WP_015859948.1">
    <property type="nucleotide sequence ID" value="NC_012796.1"/>
</dbReference>
<dbReference type="SMR" id="C4XLZ5"/>
<dbReference type="STRING" id="573370.DMR_12420"/>
<dbReference type="KEGG" id="dma:DMR_12420"/>
<dbReference type="eggNOG" id="COG0257">
    <property type="taxonomic scope" value="Bacteria"/>
</dbReference>
<dbReference type="HOGENOM" id="CLU_135723_6_2_7"/>
<dbReference type="OrthoDB" id="9802520at2"/>
<dbReference type="Proteomes" id="UP000009071">
    <property type="component" value="Chromosome"/>
</dbReference>
<dbReference type="GO" id="GO:0005737">
    <property type="term" value="C:cytoplasm"/>
    <property type="evidence" value="ECO:0007669"/>
    <property type="project" value="UniProtKB-ARBA"/>
</dbReference>
<dbReference type="GO" id="GO:1990904">
    <property type="term" value="C:ribonucleoprotein complex"/>
    <property type="evidence" value="ECO:0007669"/>
    <property type="project" value="UniProtKB-KW"/>
</dbReference>
<dbReference type="GO" id="GO:0005840">
    <property type="term" value="C:ribosome"/>
    <property type="evidence" value="ECO:0007669"/>
    <property type="project" value="UniProtKB-KW"/>
</dbReference>
<dbReference type="GO" id="GO:0003735">
    <property type="term" value="F:structural constituent of ribosome"/>
    <property type="evidence" value="ECO:0007669"/>
    <property type="project" value="InterPro"/>
</dbReference>
<dbReference type="GO" id="GO:0006412">
    <property type="term" value="P:translation"/>
    <property type="evidence" value="ECO:0007669"/>
    <property type="project" value="UniProtKB-UniRule"/>
</dbReference>
<dbReference type="HAMAP" id="MF_00251">
    <property type="entry name" value="Ribosomal_bL36"/>
    <property type="match status" value="1"/>
</dbReference>
<dbReference type="InterPro" id="IPR000473">
    <property type="entry name" value="Ribosomal_bL36"/>
</dbReference>
<dbReference type="InterPro" id="IPR035977">
    <property type="entry name" value="Ribosomal_bL36_sp"/>
</dbReference>
<dbReference type="NCBIfam" id="TIGR01022">
    <property type="entry name" value="rpmJ_bact"/>
    <property type="match status" value="1"/>
</dbReference>
<dbReference type="PANTHER" id="PTHR42888">
    <property type="entry name" value="50S RIBOSOMAL PROTEIN L36, CHLOROPLASTIC"/>
    <property type="match status" value="1"/>
</dbReference>
<dbReference type="PANTHER" id="PTHR42888:SF1">
    <property type="entry name" value="LARGE RIBOSOMAL SUBUNIT PROTEIN BL36C"/>
    <property type="match status" value="1"/>
</dbReference>
<dbReference type="Pfam" id="PF00444">
    <property type="entry name" value="Ribosomal_L36"/>
    <property type="match status" value="1"/>
</dbReference>
<dbReference type="SUPFAM" id="SSF57840">
    <property type="entry name" value="Ribosomal protein L36"/>
    <property type="match status" value="1"/>
</dbReference>
<dbReference type="PROSITE" id="PS00828">
    <property type="entry name" value="RIBOSOMAL_L36"/>
    <property type="match status" value="1"/>
</dbReference>
<organism>
    <name type="scientific">Solidesulfovibrio magneticus (strain ATCC 700980 / DSM 13731 / RS-1)</name>
    <name type="common">Desulfovibrio magneticus</name>
    <dbReference type="NCBI Taxonomy" id="573370"/>
    <lineage>
        <taxon>Bacteria</taxon>
        <taxon>Pseudomonadati</taxon>
        <taxon>Thermodesulfobacteriota</taxon>
        <taxon>Desulfovibrionia</taxon>
        <taxon>Desulfovibrionales</taxon>
        <taxon>Desulfovibrionaceae</taxon>
        <taxon>Solidesulfovibrio</taxon>
    </lineage>
</organism>
<proteinExistence type="inferred from homology"/>
<gene>
    <name evidence="1" type="primary">rpmJ</name>
    <name type="ordered locus">DMR_12420</name>
</gene>
<evidence type="ECO:0000255" key="1">
    <source>
        <dbReference type="HAMAP-Rule" id="MF_00251"/>
    </source>
</evidence>
<evidence type="ECO:0000305" key="2"/>